<name>CLPS_CLOAB</name>
<dbReference type="EMBL" id="AE001437">
    <property type="protein sequence ID" value="AAK79788.1"/>
    <property type="molecule type" value="Genomic_DNA"/>
</dbReference>
<dbReference type="PIR" id="A97125">
    <property type="entry name" value="A97125"/>
</dbReference>
<dbReference type="RefSeq" id="NP_348448.1">
    <property type="nucleotide sequence ID" value="NC_003030.1"/>
</dbReference>
<dbReference type="RefSeq" id="WP_010965129.1">
    <property type="nucleotide sequence ID" value="NC_003030.1"/>
</dbReference>
<dbReference type="SMR" id="Q97I31"/>
<dbReference type="STRING" id="272562.CA_C1823"/>
<dbReference type="KEGG" id="cac:CA_C1823"/>
<dbReference type="PATRIC" id="fig|272562.8.peg.2029"/>
<dbReference type="eggNOG" id="COG2127">
    <property type="taxonomic scope" value="Bacteria"/>
</dbReference>
<dbReference type="HOGENOM" id="CLU_134358_1_0_9"/>
<dbReference type="OrthoDB" id="9796121at2"/>
<dbReference type="Proteomes" id="UP000000814">
    <property type="component" value="Chromosome"/>
</dbReference>
<dbReference type="GO" id="GO:0030163">
    <property type="term" value="P:protein catabolic process"/>
    <property type="evidence" value="ECO:0007669"/>
    <property type="project" value="InterPro"/>
</dbReference>
<dbReference type="GO" id="GO:0006508">
    <property type="term" value="P:proteolysis"/>
    <property type="evidence" value="ECO:0007669"/>
    <property type="project" value="UniProtKB-UniRule"/>
</dbReference>
<dbReference type="FunFam" id="3.30.1390.10:FF:000002">
    <property type="entry name" value="ATP-dependent Clp protease adapter protein ClpS"/>
    <property type="match status" value="1"/>
</dbReference>
<dbReference type="Gene3D" id="3.30.1390.10">
    <property type="match status" value="1"/>
</dbReference>
<dbReference type="HAMAP" id="MF_00302">
    <property type="entry name" value="ClpS"/>
    <property type="match status" value="1"/>
</dbReference>
<dbReference type="InterPro" id="IPR022935">
    <property type="entry name" value="ClpS"/>
</dbReference>
<dbReference type="InterPro" id="IPR003769">
    <property type="entry name" value="ClpS_core"/>
</dbReference>
<dbReference type="InterPro" id="IPR014719">
    <property type="entry name" value="Ribosomal_bL12_C/ClpS-like"/>
</dbReference>
<dbReference type="PANTHER" id="PTHR33473:SF19">
    <property type="entry name" value="ATP-DEPENDENT CLP PROTEASE ADAPTER PROTEIN CLPS"/>
    <property type="match status" value="1"/>
</dbReference>
<dbReference type="PANTHER" id="PTHR33473">
    <property type="entry name" value="ATP-DEPENDENT CLP PROTEASE ADAPTER PROTEIN CLPS1, CHLOROPLASTIC"/>
    <property type="match status" value="1"/>
</dbReference>
<dbReference type="Pfam" id="PF02617">
    <property type="entry name" value="ClpS"/>
    <property type="match status" value="1"/>
</dbReference>
<dbReference type="SUPFAM" id="SSF54736">
    <property type="entry name" value="ClpS-like"/>
    <property type="match status" value="1"/>
</dbReference>
<comment type="function">
    <text evidence="1">Involved in the modulation of the specificity of the ClpAP-mediated ATP-dependent protein degradation.</text>
</comment>
<comment type="subunit">
    <text evidence="1">Binds to the N-terminal domain of the chaperone ClpA.</text>
</comment>
<comment type="similarity">
    <text evidence="1">Belongs to the ClpS family.</text>
</comment>
<keyword id="KW-1185">Reference proteome</keyword>
<proteinExistence type="inferred from homology"/>
<accession>Q97I31</accession>
<reference key="1">
    <citation type="journal article" date="2001" name="J. Bacteriol.">
        <title>Genome sequence and comparative analysis of the solvent-producing bacterium Clostridium acetobutylicum.</title>
        <authorList>
            <person name="Noelling J."/>
            <person name="Breton G."/>
            <person name="Omelchenko M.V."/>
            <person name="Makarova K.S."/>
            <person name="Zeng Q."/>
            <person name="Gibson R."/>
            <person name="Lee H.M."/>
            <person name="Dubois J."/>
            <person name="Qiu D."/>
            <person name="Hitti J."/>
            <person name="Wolf Y.I."/>
            <person name="Tatusov R.L."/>
            <person name="Sabathe F."/>
            <person name="Doucette-Stamm L.A."/>
            <person name="Soucaille P."/>
            <person name="Daly M.J."/>
            <person name="Bennett G.N."/>
            <person name="Koonin E.V."/>
            <person name="Smith D.R."/>
        </authorList>
    </citation>
    <scope>NUCLEOTIDE SEQUENCE [LARGE SCALE GENOMIC DNA]</scope>
    <source>
        <strain>ATCC 824 / DSM 792 / JCM 1419 / IAM 19013 / LMG 5710 / NBRC 13948 / NRRL B-527 / VKM B-1787 / 2291 / W</strain>
    </source>
</reference>
<gene>
    <name evidence="1" type="primary">clpS</name>
    <name type="ordered locus">CA_C1823</name>
</gene>
<protein>
    <recommendedName>
        <fullName evidence="1">ATP-dependent Clp protease adapter protein ClpS</fullName>
    </recommendedName>
</protein>
<evidence type="ECO:0000255" key="1">
    <source>
        <dbReference type="HAMAP-Rule" id="MF_00302"/>
    </source>
</evidence>
<feature type="chain" id="PRO_0000215700" description="ATP-dependent Clp protease adapter protein ClpS">
    <location>
        <begin position="1"/>
        <end position="101"/>
    </location>
</feature>
<sequence length="101" mass="11533">MSLKTSFDENIKQKHKIEKPKMYKVILHNDDYTTMEFVIEILINVFNKVPANAVKITFDVHKNGIGIAGVYPYDIAATKINEVKKLAYKNGYPLKLTMGEV</sequence>
<organism>
    <name type="scientific">Clostridium acetobutylicum (strain ATCC 824 / DSM 792 / JCM 1419 / IAM 19013 / LMG 5710 / NBRC 13948 / NRRL B-527 / VKM B-1787 / 2291 / W)</name>
    <dbReference type="NCBI Taxonomy" id="272562"/>
    <lineage>
        <taxon>Bacteria</taxon>
        <taxon>Bacillati</taxon>
        <taxon>Bacillota</taxon>
        <taxon>Clostridia</taxon>
        <taxon>Eubacteriales</taxon>
        <taxon>Clostridiaceae</taxon>
        <taxon>Clostridium</taxon>
    </lineage>
</organism>